<keyword id="KW-0030">Aminoacyl-tRNA synthetase</keyword>
<keyword id="KW-0067">ATP-binding</keyword>
<keyword id="KW-0963">Cytoplasm</keyword>
<keyword id="KW-0436">Ligase</keyword>
<keyword id="KW-0479">Metal-binding</keyword>
<keyword id="KW-0547">Nucleotide-binding</keyword>
<keyword id="KW-0648">Protein biosynthesis</keyword>
<keyword id="KW-0862">Zinc</keyword>
<feature type="chain" id="PRO_1000199275" description="Methionine--tRNA ligase">
    <location>
        <begin position="1"/>
        <end position="544"/>
    </location>
</feature>
<feature type="short sequence motif" description="'HIGH' region">
    <location>
        <begin position="10"/>
        <end position="20"/>
    </location>
</feature>
<feature type="short sequence motif" description="'KMSKS' region">
    <location>
        <begin position="329"/>
        <end position="333"/>
    </location>
</feature>
<feature type="binding site" evidence="1">
    <location>
        <position position="141"/>
    </location>
    <ligand>
        <name>Zn(2+)</name>
        <dbReference type="ChEBI" id="CHEBI:29105"/>
    </ligand>
</feature>
<feature type="binding site" evidence="1">
    <location>
        <position position="144"/>
    </location>
    <ligand>
        <name>Zn(2+)</name>
        <dbReference type="ChEBI" id="CHEBI:29105"/>
    </ligand>
</feature>
<feature type="binding site" evidence="1">
    <location>
        <position position="153"/>
    </location>
    <ligand>
        <name>Zn(2+)</name>
        <dbReference type="ChEBI" id="CHEBI:29105"/>
    </ligand>
</feature>
<feature type="binding site" evidence="1">
    <location>
        <position position="156"/>
    </location>
    <ligand>
        <name>Zn(2+)</name>
        <dbReference type="ChEBI" id="CHEBI:29105"/>
    </ligand>
</feature>
<feature type="binding site" evidence="1">
    <location>
        <position position="332"/>
    </location>
    <ligand>
        <name>ATP</name>
        <dbReference type="ChEBI" id="CHEBI:30616"/>
    </ligand>
</feature>
<reference key="1">
    <citation type="submission" date="2008-10" db="EMBL/GenBank/DDBJ databases">
        <title>Genome sequence of Bacillus cereus B4264.</title>
        <authorList>
            <person name="Dodson R.J."/>
            <person name="Durkin A.S."/>
            <person name="Rosovitz M.J."/>
            <person name="Rasko D.A."/>
            <person name="Hoffmaster A."/>
            <person name="Ravel J."/>
            <person name="Sutton G."/>
        </authorList>
    </citation>
    <scope>NUCLEOTIDE SEQUENCE [LARGE SCALE GENOMIC DNA]</scope>
    <source>
        <strain>B4264</strain>
    </source>
</reference>
<comment type="function">
    <text evidence="1">Is required not only for elongation of protein synthesis but also for the initiation of all mRNA translation through initiator tRNA(fMet) aminoacylation.</text>
</comment>
<comment type="catalytic activity">
    <reaction evidence="1">
        <text>tRNA(Met) + L-methionine + ATP = L-methionyl-tRNA(Met) + AMP + diphosphate</text>
        <dbReference type="Rhea" id="RHEA:13481"/>
        <dbReference type="Rhea" id="RHEA-COMP:9667"/>
        <dbReference type="Rhea" id="RHEA-COMP:9698"/>
        <dbReference type="ChEBI" id="CHEBI:30616"/>
        <dbReference type="ChEBI" id="CHEBI:33019"/>
        <dbReference type="ChEBI" id="CHEBI:57844"/>
        <dbReference type="ChEBI" id="CHEBI:78442"/>
        <dbReference type="ChEBI" id="CHEBI:78530"/>
        <dbReference type="ChEBI" id="CHEBI:456215"/>
        <dbReference type="EC" id="6.1.1.10"/>
    </reaction>
</comment>
<comment type="cofactor">
    <cofactor evidence="1">
        <name>Zn(2+)</name>
        <dbReference type="ChEBI" id="CHEBI:29105"/>
    </cofactor>
    <text evidence="1">Binds 1 zinc ion per subunit.</text>
</comment>
<comment type="subunit">
    <text evidence="1">Monomer.</text>
</comment>
<comment type="subcellular location">
    <subcellularLocation>
        <location evidence="1">Cytoplasm</location>
    </subcellularLocation>
</comment>
<comment type="similarity">
    <text evidence="1">Belongs to the class-I aminoacyl-tRNA synthetase family. MetG type 1 subfamily.</text>
</comment>
<evidence type="ECO:0000255" key="1">
    <source>
        <dbReference type="HAMAP-Rule" id="MF_00098"/>
    </source>
</evidence>
<sequence length="544" mass="62754">MSIFIGGAWPYANGSLHLGHIASLLPGDILARYYRAKGENVLYVSGSDCNGTPIAIRAKQEGVTAKEIANKYHEEFQRCFRDLGFTYDCYTRTDSEHHHETVQKVFLRLLEEGYIYKKTVEQAYCETCTQFLPDRYVEGICPYCHEAARGDQCDACSAILDPLDLLEKKCKLCGSTPSVEETEHFYFALHTFQEQIKKVVEIVKEKGTWRDNAIQLTERYVKEGLQDRAVSRDLPIGVSIPVKGYEDKKIYVWIEAVAGYYSASKHWAEETGKDDQEFWNSDAQTYYVHGKDNIPFHSVIWPAVLLGIGEEAIPRHIVSNEYLTVEKRKLSTSKNWAVWVPDILERYDPDSIRYFLTVNAPENRDTDFSWREFIYSHNSELLGAYGNFVNRTLKFIEKYYGGIVPKGSIEVELKDKVEGLYKHVGEAIEQTKFKVALETIFDAVRFANKYFDEKQPWKQREDDPVSCEETIYNCVYLIANFANLLEPFLPFSSERVRSTLSIIKRNWEPQNTLPSRIDSVQPLFERIDVKQIEHEVGKLYGAVK</sequence>
<organism>
    <name type="scientific">Bacillus cereus (strain B4264)</name>
    <dbReference type="NCBI Taxonomy" id="405532"/>
    <lineage>
        <taxon>Bacteria</taxon>
        <taxon>Bacillati</taxon>
        <taxon>Bacillota</taxon>
        <taxon>Bacilli</taxon>
        <taxon>Bacillales</taxon>
        <taxon>Bacillaceae</taxon>
        <taxon>Bacillus</taxon>
        <taxon>Bacillus cereus group</taxon>
    </lineage>
</organism>
<gene>
    <name evidence="1" type="primary">metG</name>
    <name type="ordered locus">BCB4264_A5183</name>
</gene>
<name>SYM_BACC4</name>
<dbReference type="EC" id="6.1.1.10" evidence="1"/>
<dbReference type="EMBL" id="CP001176">
    <property type="protein sequence ID" value="ACK59077.1"/>
    <property type="molecule type" value="Genomic_DNA"/>
</dbReference>
<dbReference type="RefSeq" id="WP_000021587.1">
    <property type="nucleotide sequence ID" value="NC_011725.1"/>
</dbReference>
<dbReference type="SMR" id="B7HD62"/>
<dbReference type="KEGG" id="bcb:BCB4264_A5183"/>
<dbReference type="HOGENOM" id="CLU_009710_1_2_9"/>
<dbReference type="Proteomes" id="UP000007096">
    <property type="component" value="Chromosome"/>
</dbReference>
<dbReference type="GO" id="GO:0005829">
    <property type="term" value="C:cytosol"/>
    <property type="evidence" value="ECO:0007669"/>
    <property type="project" value="TreeGrafter"/>
</dbReference>
<dbReference type="GO" id="GO:0005524">
    <property type="term" value="F:ATP binding"/>
    <property type="evidence" value="ECO:0007669"/>
    <property type="project" value="UniProtKB-UniRule"/>
</dbReference>
<dbReference type="GO" id="GO:0046872">
    <property type="term" value="F:metal ion binding"/>
    <property type="evidence" value="ECO:0007669"/>
    <property type="project" value="UniProtKB-KW"/>
</dbReference>
<dbReference type="GO" id="GO:0004825">
    <property type="term" value="F:methionine-tRNA ligase activity"/>
    <property type="evidence" value="ECO:0007669"/>
    <property type="project" value="UniProtKB-UniRule"/>
</dbReference>
<dbReference type="GO" id="GO:0006431">
    <property type="term" value="P:methionyl-tRNA aminoacylation"/>
    <property type="evidence" value="ECO:0007669"/>
    <property type="project" value="UniProtKB-UniRule"/>
</dbReference>
<dbReference type="CDD" id="cd07957">
    <property type="entry name" value="Anticodon_Ia_Met"/>
    <property type="match status" value="1"/>
</dbReference>
<dbReference type="CDD" id="cd00814">
    <property type="entry name" value="MetRS_core"/>
    <property type="match status" value="1"/>
</dbReference>
<dbReference type="FunFam" id="1.10.730.10:FF:000041">
    <property type="entry name" value="Methionine--tRNA ligase"/>
    <property type="match status" value="1"/>
</dbReference>
<dbReference type="FunFam" id="2.20.28.20:FF:000001">
    <property type="entry name" value="Methionine--tRNA ligase"/>
    <property type="match status" value="1"/>
</dbReference>
<dbReference type="Gene3D" id="3.40.50.620">
    <property type="entry name" value="HUPs"/>
    <property type="match status" value="1"/>
</dbReference>
<dbReference type="Gene3D" id="1.10.730.10">
    <property type="entry name" value="Isoleucyl-tRNA Synthetase, Domain 1"/>
    <property type="match status" value="1"/>
</dbReference>
<dbReference type="Gene3D" id="2.20.28.20">
    <property type="entry name" value="Methionyl-tRNA synthetase, Zn-domain"/>
    <property type="match status" value="1"/>
</dbReference>
<dbReference type="HAMAP" id="MF_00098">
    <property type="entry name" value="Met_tRNA_synth_type1"/>
    <property type="match status" value="1"/>
</dbReference>
<dbReference type="InterPro" id="IPR001412">
    <property type="entry name" value="aa-tRNA-synth_I_CS"/>
</dbReference>
<dbReference type="InterPro" id="IPR041872">
    <property type="entry name" value="Anticodon_Met"/>
</dbReference>
<dbReference type="InterPro" id="IPR023458">
    <property type="entry name" value="Met-tRNA_ligase_1"/>
</dbReference>
<dbReference type="InterPro" id="IPR014758">
    <property type="entry name" value="Met-tRNA_synth"/>
</dbReference>
<dbReference type="InterPro" id="IPR015413">
    <property type="entry name" value="Methionyl/Leucyl_tRNA_Synth"/>
</dbReference>
<dbReference type="InterPro" id="IPR033911">
    <property type="entry name" value="MetRS_core"/>
</dbReference>
<dbReference type="InterPro" id="IPR029038">
    <property type="entry name" value="MetRS_Zn"/>
</dbReference>
<dbReference type="InterPro" id="IPR014729">
    <property type="entry name" value="Rossmann-like_a/b/a_fold"/>
</dbReference>
<dbReference type="InterPro" id="IPR009080">
    <property type="entry name" value="tRNAsynth_Ia_anticodon-bd"/>
</dbReference>
<dbReference type="NCBIfam" id="TIGR00398">
    <property type="entry name" value="metG"/>
    <property type="match status" value="1"/>
</dbReference>
<dbReference type="PANTHER" id="PTHR45765">
    <property type="entry name" value="METHIONINE--TRNA LIGASE"/>
    <property type="match status" value="1"/>
</dbReference>
<dbReference type="PANTHER" id="PTHR45765:SF1">
    <property type="entry name" value="METHIONINE--TRNA LIGASE, CYTOPLASMIC"/>
    <property type="match status" value="1"/>
</dbReference>
<dbReference type="Pfam" id="PF19303">
    <property type="entry name" value="Anticodon_3"/>
    <property type="match status" value="1"/>
</dbReference>
<dbReference type="Pfam" id="PF09334">
    <property type="entry name" value="tRNA-synt_1g"/>
    <property type="match status" value="1"/>
</dbReference>
<dbReference type="PRINTS" id="PR01041">
    <property type="entry name" value="TRNASYNTHMET"/>
</dbReference>
<dbReference type="SUPFAM" id="SSF47323">
    <property type="entry name" value="Anticodon-binding domain of a subclass of class I aminoacyl-tRNA synthetases"/>
    <property type="match status" value="1"/>
</dbReference>
<dbReference type="SUPFAM" id="SSF57770">
    <property type="entry name" value="Methionyl-tRNA synthetase (MetRS), Zn-domain"/>
    <property type="match status" value="1"/>
</dbReference>
<dbReference type="SUPFAM" id="SSF52374">
    <property type="entry name" value="Nucleotidylyl transferase"/>
    <property type="match status" value="1"/>
</dbReference>
<dbReference type="PROSITE" id="PS00178">
    <property type="entry name" value="AA_TRNA_LIGASE_I"/>
    <property type="match status" value="1"/>
</dbReference>
<proteinExistence type="inferred from homology"/>
<accession>B7HD62</accession>
<protein>
    <recommendedName>
        <fullName evidence="1">Methionine--tRNA ligase</fullName>
        <ecNumber evidence="1">6.1.1.10</ecNumber>
    </recommendedName>
    <alternativeName>
        <fullName evidence="1">Methionyl-tRNA synthetase</fullName>
        <shortName evidence="1">MetRS</shortName>
    </alternativeName>
</protein>